<protein>
    <recommendedName>
        <fullName evidence="1">Ribosome maturation factor RimM</fullName>
    </recommendedName>
</protein>
<organism>
    <name type="scientific">Shouchella clausii (strain KSM-K16)</name>
    <name type="common">Alkalihalobacillus clausii</name>
    <dbReference type="NCBI Taxonomy" id="66692"/>
    <lineage>
        <taxon>Bacteria</taxon>
        <taxon>Bacillati</taxon>
        <taxon>Bacillota</taxon>
        <taxon>Bacilli</taxon>
        <taxon>Bacillales</taxon>
        <taxon>Bacillaceae</taxon>
        <taxon>Shouchella</taxon>
    </lineage>
</organism>
<keyword id="KW-0143">Chaperone</keyword>
<keyword id="KW-0963">Cytoplasm</keyword>
<keyword id="KW-1185">Reference proteome</keyword>
<keyword id="KW-0690">Ribosome biogenesis</keyword>
<keyword id="KW-0698">rRNA processing</keyword>
<dbReference type="EMBL" id="AP006627">
    <property type="protein sequence ID" value="BAD64825.1"/>
    <property type="status" value="ALT_INIT"/>
    <property type="molecule type" value="Genomic_DNA"/>
</dbReference>
<dbReference type="RefSeq" id="WP_035201490.1">
    <property type="nucleotide sequence ID" value="NC_006582.1"/>
</dbReference>
<dbReference type="SMR" id="Q5WFN5"/>
<dbReference type="STRING" id="66692.ABC2290"/>
<dbReference type="KEGG" id="bcl:ABC2290"/>
<dbReference type="eggNOG" id="COG0806">
    <property type="taxonomic scope" value="Bacteria"/>
</dbReference>
<dbReference type="HOGENOM" id="CLU_077636_3_1_9"/>
<dbReference type="OrthoDB" id="9810331at2"/>
<dbReference type="Proteomes" id="UP000001168">
    <property type="component" value="Chromosome"/>
</dbReference>
<dbReference type="GO" id="GO:0005737">
    <property type="term" value="C:cytoplasm"/>
    <property type="evidence" value="ECO:0007669"/>
    <property type="project" value="UniProtKB-SubCell"/>
</dbReference>
<dbReference type="GO" id="GO:0005840">
    <property type="term" value="C:ribosome"/>
    <property type="evidence" value="ECO:0007669"/>
    <property type="project" value="InterPro"/>
</dbReference>
<dbReference type="GO" id="GO:0043022">
    <property type="term" value="F:ribosome binding"/>
    <property type="evidence" value="ECO:0007669"/>
    <property type="project" value="InterPro"/>
</dbReference>
<dbReference type="GO" id="GO:0042274">
    <property type="term" value="P:ribosomal small subunit biogenesis"/>
    <property type="evidence" value="ECO:0007669"/>
    <property type="project" value="UniProtKB-UniRule"/>
</dbReference>
<dbReference type="GO" id="GO:0006364">
    <property type="term" value="P:rRNA processing"/>
    <property type="evidence" value="ECO:0007669"/>
    <property type="project" value="UniProtKB-UniRule"/>
</dbReference>
<dbReference type="Gene3D" id="2.30.30.240">
    <property type="entry name" value="PRC-barrel domain"/>
    <property type="match status" value="1"/>
</dbReference>
<dbReference type="Gene3D" id="2.40.30.60">
    <property type="entry name" value="RimM"/>
    <property type="match status" value="1"/>
</dbReference>
<dbReference type="HAMAP" id="MF_00014">
    <property type="entry name" value="Ribosome_mat_RimM"/>
    <property type="match status" value="1"/>
</dbReference>
<dbReference type="InterPro" id="IPR011033">
    <property type="entry name" value="PRC_barrel-like_sf"/>
</dbReference>
<dbReference type="InterPro" id="IPR056792">
    <property type="entry name" value="PRC_RimM"/>
</dbReference>
<dbReference type="InterPro" id="IPR011961">
    <property type="entry name" value="RimM"/>
</dbReference>
<dbReference type="InterPro" id="IPR002676">
    <property type="entry name" value="RimM_N"/>
</dbReference>
<dbReference type="InterPro" id="IPR036976">
    <property type="entry name" value="RimM_N_sf"/>
</dbReference>
<dbReference type="InterPro" id="IPR009000">
    <property type="entry name" value="Transl_B-barrel_sf"/>
</dbReference>
<dbReference type="NCBIfam" id="TIGR02273">
    <property type="entry name" value="16S_RimM"/>
    <property type="match status" value="1"/>
</dbReference>
<dbReference type="PANTHER" id="PTHR33692">
    <property type="entry name" value="RIBOSOME MATURATION FACTOR RIMM"/>
    <property type="match status" value="1"/>
</dbReference>
<dbReference type="PANTHER" id="PTHR33692:SF1">
    <property type="entry name" value="RIBOSOME MATURATION FACTOR RIMM"/>
    <property type="match status" value="1"/>
</dbReference>
<dbReference type="Pfam" id="PF24986">
    <property type="entry name" value="PRC_RimM"/>
    <property type="match status" value="1"/>
</dbReference>
<dbReference type="Pfam" id="PF01782">
    <property type="entry name" value="RimM"/>
    <property type="match status" value="1"/>
</dbReference>
<dbReference type="SUPFAM" id="SSF50346">
    <property type="entry name" value="PRC-barrel domain"/>
    <property type="match status" value="1"/>
</dbReference>
<dbReference type="SUPFAM" id="SSF50447">
    <property type="entry name" value="Translation proteins"/>
    <property type="match status" value="1"/>
</dbReference>
<feature type="chain" id="PRO_0000163251" description="Ribosome maturation factor RimM">
    <location>
        <begin position="1"/>
        <end position="173"/>
    </location>
</feature>
<feature type="domain" description="PRC barrel" evidence="1">
    <location>
        <begin position="97"/>
        <end position="170"/>
    </location>
</feature>
<comment type="function">
    <text evidence="1">An accessory protein needed during the final step in the assembly of 30S ribosomal subunit, possibly for assembly of the head region. Essential for efficient processing of 16S rRNA. May be needed both before and after RbfA during the maturation of 16S rRNA. It has affinity for free ribosomal 30S subunits but not for 70S ribosomes.</text>
</comment>
<comment type="subunit">
    <text evidence="1">Binds ribosomal protein uS19.</text>
</comment>
<comment type="subcellular location">
    <subcellularLocation>
        <location evidence="1">Cytoplasm</location>
    </subcellularLocation>
</comment>
<comment type="domain">
    <text evidence="1">The PRC barrel domain binds ribosomal protein uS19.</text>
</comment>
<comment type="similarity">
    <text evidence="1">Belongs to the RimM family.</text>
</comment>
<comment type="sequence caution" evidence="2">
    <conflict type="erroneous initiation">
        <sequence resource="EMBL-CDS" id="BAD64825"/>
    </conflict>
</comment>
<accession>Q5WFN5</accession>
<sequence length="173" mass="19981">MTNWYNVGRLVNTHGVRGEVRVLSNTDFPEERYANGSVLKVAKSPQAEGTLVTVRSHRTHKNFDLLTFEGYNSINEVECFKGSYLYVSEDQLSELDEHEYYYHEIIGCTVVDEEGTKLGKIKDIIETGANDVWVVDRQQRKDLLLPYIEEVVKEVDVENKRIRVHIMEGLDDE</sequence>
<name>RIMM_SHOC1</name>
<gene>
    <name evidence="1" type="primary">rimM</name>
    <name type="ordered locus">ABC2290</name>
</gene>
<proteinExistence type="inferred from homology"/>
<evidence type="ECO:0000255" key="1">
    <source>
        <dbReference type="HAMAP-Rule" id="MF_00014"/>
    </source>
</evidence>
<evidence type="ECO:0000305" key="2"/>
<reference key="1">
    <citation type="submission" date="2003-10" db="EMBL/GenBank/DDBJ databases">
        <title>The complete genome sequence of the alkaliphilic Bacillus clausii KSM-K16.</title>
        <authorList>
            <person name="Takaki Y."/>
            <person name="Kageyama Y."/>
            <person name="Shimamura S."/>
            <person name="Suzuki H."/>
            <person name="Nishi S."/>
            <person name="Hatada Y."/>
            <person name="Kawai S."/>
            <person name="Ito S."/>
            <person name="Horikoshi K."/>
        </authorList>
    </citation>
    <scope>NUCLEOTIDE SEQUENCE [LARGE SCALE GENOMIC DNA]</scope>
    <source>
        <strain>KSM-K16</strain>
    </source>
</reference>